<protein>
    <recommendedName>
        <fullName>Bacterial non-heme ferritin</fullName>
        <ecNumber>1.16.3.2</ecNumber>
    </recommendedName>
</protein>
<proteinExistence type="evidence at transcript level"/>
<reference key="1">
    <citation type="journal article" date="2004" name="Microbiology">
        <title>Transcriptional regulation of the Bacteroides fragilis ferritin gene (ftnA) by redox stress.</title>
        <authorList>
            <person name="Rocha E.R."/>
            <person name="Smith C.J."/>
        </authorList>
    </citation>
    <scope>NUCLEOTIDE SEQUENCE [GENOMIC DNA]</scope>
    <scope>TRANSCRIPTIONAL REGULATION</scope>
    <source>
        <strain>638R</strain>
    </source>
</reference>
<reference key="2">
    <citation type="journal article" date="2010" name="Microbiology">
        <title>Twenty-eight divergent polysaccharide loci specifying within- and amongst-strain capsule diversity in three strains of Bacteroides fragilis.</title>
        <authorList>
            <person name="Patrick S."/>
            <person name="Blakely G.W."/>
            <person name="Houston S."/>
            <person name="Moore J."/>
            <person name="Abratt V.R."/>
            <person name="Bertalan M."/>
            <person name="Cerdeno-Tarraga A.M."/>
            <person name="Quail M.A."/>
            <person name="Corton N."/>
            <person name="Corton C."/>
            <person name="Bignell A."/>
            <person name="Barron A."/>
            <person name="Clark L."/>
            <person name="Bentley S.D."/>
            <person name="Parkhill J."/>
        </authorList>
    </citation>
    <scope>NUCLEOTIDE SEQUENCE [LARGE SCALE GENOMIC DNA]</scope>
    <source>
        <strain>638R</strain>
    </source>
</reference>
<dbReference type="EC" id="1.16.3.2"/>
<dbReference type="EMBL" id="AY028371">
    <property type="protein sequence ID" value="AAK29742.1"/>
    <property type="molecule type" value="Genomic_DNA"/>
</dbReference>
<dbReference type="EMBL" id="FQ312004">
    <property type="protein sequence ID" value="CBW23380.1"/>
    <property type="molecule type" value="Genomic_DNA"/>
</dbReference>
<dbReference type="RefSeq" id="WP_005788812.1">
    <property type="nucleotide sequence ID" value="NZ_CAXSTL010000009.1"/>
</dbReference>
<dbReference type="SMR" id="E1WS50"/>
<dbReference type="KEGG" id="bfg:BF638R_2891"/>
<dbReference type="PATRIC" id="fig|862962.3.peg.2972"/>
<dbReference type="HOGENOM" id="CLU_065681_1_2_10"/>
<dbReference type="BRENDA" id="1.16.3.2">
    <property type="organism ID" value="755"/>
</dbReference>
<dbReference type="Proteomes" id="UP000008560">
    <property type="component" value="Chromosome"/>
</dbReference>
<dbReference type="GO" id="GO:0005829">
    <property type="term" value="C:cytosol"/>
    <property type="evidence" value="ECO:0007669"/>
    <property type="project" value="TreeGrafter"/>
</dbReference>
<dbReference type="GO" id="GO:0008199">
    <property type="term" value="F:ferric iron binding"/>
    <property type="evidence" value="ECO:0007669"/>
    <property type="project" value="InterPro"/>
</dbReference>
<dbReference type="GO" id="GO:0008198">
    <property type="term" value="F:ferrous iron binding"/>
    <property type="evidence" value="ECO:0007669"/>
    <property type="project" value="TreeGrafter"/>
</dbReference>
<dbReference type="GO" id="GO:0004322">
    <property type="term" value="F:ferroxidase activity"/>
    <property type="evidence" value="ECO:0007669"/>
    <property type="project" value="TreeGrafter"/>
</dbReference>
<dbReference type="GO" id="GO:0006879">
    <property type="term" value="P:intracellular iron ion homeostasis"/>
    <property type="evidence" value="ECO:0007669"/>
    <property type="project" value="UniProtKB-KW"/>
</dbReference>
<dbReference type="GO" id="GO:0006826">
    <property type="term" value="P:iron ion transport"/>
    <property type="evidence" value="ECO:0007669"/>
    <property type="project" value="InterPro"/>
</dbReference>
<dbReference type="CDD" id="cd01055">
    <property type="entry name" value="Nonheme_Ferritin"/>
    <property type="match status" value="1"/>
</dbReference>
<dbReference type="FunFam" id="1.20.1260.10:FF:000001">
    <property type="entry name" value="Non-heme ferritin"/>
    <property type="match status" value="1"/>
</dbReference>
<dbReference type="Gene3D" id="1.20.1260.10">
    <property type="match status" value="1"/>
</dbReference>
<dbReference type="InterPro" id="IPR001519">
    <property type="entry name" value="Ferritin"/>
</dbReference>
<dbReference type="InterPro" id="IPR012347">
    <property type="entry name" value="Ferritin-like"/>
</dbReference>
<dbReference type="InterPro" id="IPR009040">
    <property type="entry name" value="Ferritin-like_diiron"/>
</dbReference>
<dbReference type="InterPro" id="IPR009078">
    <property type="entry name" value="Ferritin-like_SF"/>
</dbReference>
<dbReference type="InterPro" id="IPR008331">
    <property type="entry name" value="Ferritin_DPS_dom"/>
</dbReference>
<dbReference type="InterPro" id="IPR041719">
    <property type="entry name" value="Ferritin_prok"/>
</dbReference>
<dbReference type="PANTHER" id="PTHR11431:SF127">
    <property type="entry name" value="BACTERIAL NON-HEME FERRITIN"/>
    <property type="match status" value="1"/>
</dbReference>
<dbReference type="PANTHER" id="PTHR11431">
    <property type="entry name" value="FERRITIN"/>
    <property type="match status" value="1"/>
</dbReference>
<dbReference type="Pfam" id="PF00210">
    <property type="entry name" value="Ferritin"/>
    <property type="match status" value="1"/>
</dbReference>
<dbReference type="SUPFAM" id="SSF47240">
    <property type="entry name" value="Ferritin-like"/>
    <property type="match status" value="1"/>
</dbReference>
<dbReference type="PROSITE" id="PS50905">
    <property type="entry name" value="FERRITIN_LIKE"/>
    <property type="match status" value="1"/>
</dbReference>
<comment type="function">
    <text>May alleviate iron toxicity in the presence of oxygen.</text>
</comment>
<comment type="catalytic activity">
    <reaction>
        <text>4 Fe(2+) + O2 + 6 H2O = 4 iron(III) oxide-hydroxide + 12 H(+)</text>
        <dbReference type="Rhea" id="RHEA:11972"/>
        <dbReference type="ChEBI" id="CHEBI:15377"/>
        <dbReference type="ChEBI" id="CHEBI:15378"/>
        <dbReference type="ChEBI" id="CHEBI:15379"/>
        <dbReference type="ChEBI" id="CHEBI:29033"/>
        <dbReference type="ChEBI" id="CHEBI:78619"/>
        <dbReference type="EC" id="1.16.3.2"/>
    </reaction>
</comment>
<comment type="subunit">
    <text evidence="1">Homooligomer of 24 subunits that assemble into a spherical protein shell (12 +/- 1 nM diameter) that can sequester at least 2000 iron atoms.</text>
</comment>
<comment type="induction">
    <text evidence="3">Expression is induced in the presence of excess iron in an oxidative environment but not in reduced anaerobic conditions. Is also regulated by oxyR.</text>
</comment>
<comment type="similarity">
    <text evidence="4">Belongs to the ferritin family. Prokaryotic subfamily.</text>
</comment>
<accession>E1WS50</accession>
<accession>P28733</accession>
<accession>Q9AEU4</accession>
<gene>
    <name type="primary">ftnA</name>
    <name type="ordered locus">BF638R_2891</name>
</gene>
<name>FTN_BACF6</name>
<evidence type="ECO:0000250" key="1"/>
<evidence type="ECO:0000255" key="2">
    <source>
        <dbReference type="PROSITE-ProRule" id="PRU00085"/>
    </source>
</evidence>
<evidence type="ECO:0000269" key="3">
    <source>
    </source>
</evidence>
<evidence type="ECO:0000305" key="4"/>
<keyword id="KW-0408">Iron</keyword>
<keyword id="KW-0409">Iron storage</keyword>
<keyword id="KW-0479">Metal-binding</keyword>
<keyword id="KW-0560">Oxidoreductase</keyword>
<feature type="chain" id="PRO_0000405241" description="Bacterial non-heme ferritin">
    <location>
        <begin position="1"/>
        <end position="159"/>
    </location>
</feature>
<feature type="domain" description="Ferritin-like diiron" evidence="2">
    <location>
        <begin position="1"/>
        <end position="145"/>
    </location>
</feature>
<feature type="binding site" evidence="2">
    <location>
        <position position="17"/>
    </location>
    <ligand>
        <name>Fe cation</name>
        <dbReference type="ChEBI" id="CHEBI:24875"/>
        <label>1</label>
    </ligand>
</feature>
<feature type="binding site" evidence="2">
    <location>
        <position position="50"/>
    </location>
    <ligand>
        <name>Fe cation</name>
        <dbReference type="ChEBI" id="CHEBI:24875"/>
        <label>1</label>
    </ligand>
</feature>
<feature type="binding site" evidence="2">
    <location>
        <position position="50"/>
    </location>
    <ligand>
        <name>Fe cation</name>
        <dbReference type="ChEBI" id="CHEBI:24875"/>
        <label>2</label>
    </ligand>
</feature>
<feature type="binding site" evidence="2">
    <location>
        <position position="53"/>
    </location>
    <ligand>
        <name>Fe cation</name>
        <dbReference type="ChEBI" id="CHEBI:24875"/>
        <label>1</label>
    </ligand>
</feature>
<feature type="binding site" evidence="2">
    <location>
        <position position="94"/>
    </location>
    <ligand>
        <name>Fe cation</name>
        <dbReference type="ChEBI" id="CHEBI:24875"/>
        <label>2</label>
    </ligand>
</feature>
<feature type="binding site" evidence="2">
    <location>
        <position position="127"/>
    </location>
    <ligand>
        <name>Fe cation</name>
        <dbReference type="ChEBI" id="CHEBI:24875"/>
        <label>2</label>
    </ligand>
</feature>
<organism>
    <name type="scientific">Bacteroides fragilis (strain 638R)</name>
    <dbReference type="NCBI Taxonomy" id="862962"/>
    <lineage>
        <taxon>Bacteria</taxon>
        <taxon>Pseudomonadati</taxon>
        <taxon>Bacteroidota</taxon>
        <taxon>Bacteroidia</taxon>
        <taxon>Bacteroidales</taxon>
        <taxon>Bacteroidaceae</taxon>
        <taxon>Bacteroides</taxon>
    </lineage>
</organism>
<sequence length="159" mass="18064">MISEKLQNAINEQISAEMWSSNLYLSMSFYFEREGFSGFAHWMKKQSQEEMGHAYAMADYIIKRGGIAKVDKIDVVPTGWGTPLEVFEHVFEHERHVSKLVDALVDIAAAEKDKATQDFLWGFVREQVEEEATAQGIVDKIKRAGDAGIFFIDSQLGQR</sequence>